<feature type="chain" id="PRO_0000337886" description="Anti-adapter protein IraM">
    <location>
        <begin position="1"/>
        <end position="120"/>
    </location>
</feature>
<gene>
    <name evidence="1" type="primary">iraM</name>
    <name evidence="1" type="synonym">rssC</name>
    <name type="ordered locus">STM1110</name>
</gene>
<organism>
    <name type="scientific">Salmonella typhimurium (strain LT2 / SGSC1412 / ATCC 700720)</name>
    <dbReference type="NCBI Taxonomy" id="99287"/>
    <lineage>
        <taxon>Bacteria</taxon>
        <taxon>Pseudomonadati</taxon>
        <taxon>Pseudomonadota</taxon>
        <taxon>Gammaproteobacteria</taxon>
        <taxon>Enterobacterales</taxon>
        <taxon>Enterobacteriaceae</taxon>
        <taxon>Salmonella</taxon>
    </lineage>
</organism>
<dbReference type="EMBL" id="AF214144">
    <property type="protein sequence ID" value="AAG43924.1"/>
    <property type="molecule type" value="Genomic_DNA"/>
</dbReference>
<dbReference type="EMBL" id="AE006468">
    <property type="protein sequence ID" value="AAL20042.1"/>
    <property type="molecule type" value="Genomic_DNA"/>
</dbReference>
<dbReference type="RefSeq" id="NP_460083.1">
    <property type="nucleotide sequence ID" value="NC_003197.2"/>
</dbReference>
<dbReference type="RefSeq" id="WP_010989013.1">
    <property type="nucleotide sequence ID" value="NC_003197.2"/>
</dbReference>
<dbReference type="SMR" id="Q9F0N8"/>
<dbReference type="STRING" id="99287.STM1110"/>
<dbReference type="PaxDb" id="99287-STM1110"/>
<dbReference type="GeneID" id="1252628"/>
<dbReference type="KEGG" id="stm:STM1110"/>
<dbReference type="PATRIC" id="fig|99287.12.peg.1174"/>
<dbReference type="HOGENOM" id="CLU_143527_1_0_6"/>
<dbReference type="PhylomeDB" id="Q9F0N8"/>
<dbReference type="BioCyc" id="SENT99287:STM1110-MONOMER"/>
<dbReference type="Proteomes" id="UP000001014">
    <property type="component" value="Chromosome"/>
</dbReference>
<dbReference type="GO" id="GO:0005737">
    <property type="term" value="C:cytoplasm"/>
    <property type="evidence" value="ECO:0007669"/>
    <property type="project" value="UniProtKB-SubCell"/>
</dbReference>
<dbReference type="GO" id="GO:0009267">
    <property type="term" value="P:cellular response to starvation"/>
    <property type="evidence" value="ECO:0007669"/>
    <property type="project" value="UniProtKB-UniRule"/>
</dbReference>
<dbReference type="Gene3D" id="2.40.50.650">
    <property type="match status" value="1"/>
</dbReference>
<dbReference type="HAMAP" id="MF_01199">
    <property type="entry name" value="Anti_adapt_IraM"/>
    <property type="match status" value="1"/>
</dbReference>
<dbReference type="InterPro" id="IPR014448">
    <property type="entry name" value="Anti-adapter_IraM"/>
</dbReference>
<dbReference type="InterPro" id="IPR038679">
    <property type="entry name" value="PmrD_sf"/>
</dbReference>
<dbReference type="NCBIfam" id="NF007393">
    <property type="entry name" value="PRK09919.1"/>
    <property type="match status" value="1"/>
</dbReference>
<dbReference type="PIRSF" id="PIRSF007036">
    <property type="entry name" value="Elb1"/>
    <property type="match status" value="1"/>
</dbReference>
<accession>Q9F0N8</accession>
<accession>Q7CQS4</accession>
<evidence type="ECO:0000255" key="1">
    <source>
        <dbReference type="HAMAP-Rule" id="MF_01199"/>
    </source>
</evidence>
<evidence type="ECO:0000269" key="2">
    <source>
    </source>
</evidence>
<comment type="function">
    <text evidence="1 2">Involved in the stabilization of the sigma stress factor RpoS.</text>
</comment>
<comment type="subcellular location">
    <subcellularLocation>
        <location evidence="1">Cytoplasm</location>
    </subcellularLocation>
</comment>
<comment type="similarity">
    <text evidence="1">Belongs to the IraM/RssC family.</text>
</comment>
<sequence>MEWKVVDTVISPSTGVSFSCIHSLKNLRLTLWYQADVYMPPGSIIIPFNKGVLINDKLYPVTVYNVTRFNPVLWKSLKENSHCPGNCNPKSEACSYPFECLVSVCPFGLTRNIQIDNKKV</sequence>
<reference key="1">
    <citation type="journal article" date="2008" name="Mol. Microbiol.">
        <title>Multiple pathways for regulation of sigmaS (RpoS) stability in Escherichia coli via the action of multiple anti-adaptors.</title>
        <authorList>
            <person name="Bougdour A."/>
            <person name="Cunning C."/>
            <person name="Baptiste P.J."/>
            <person name="Elliott T."/>
            <person name="Gottesman S."/>
        </authorList>
    </citation>
    <scope>NUCLEOTIDE SEQUENCE [GENOMIC DNA]</scope>
    <scope>FUNCTION IN THE STABILIZATION OF RPOS</scope>
    <source>
        <strain>LT2 / SGSC1412 / ATCC 700720</strain>
    </source>
</reference>
<reference key="2">
    <citation type="journal article" date="2001" name="Nature">
        <title>Complete genome sequence of Salmonella enterica serovar Typhimurium LT2.</title>
        <authorList>
            <person name="McClelland M."/>
            <person name="Sanderson K.E."/>
            <person name="Spieth J."/>
            <person name="Clifton S.W."/>
            <person name="Latreille P."/>
            <person name="Courtney L."/>
            <person name="Porwollik S."/>
            <person name="Ali J."/>
            <person name="Dante M."/>
            <person name="Du F."/>
            <person name="Hou S."/>
            <person name="Layman D."/>
            <person name="Leonard S."/>
            <person name="Nguyen C."/>
            <person name="Scott K."/>
            <person name="Holmes A."/>
            <person name="Grewal N."/>
            <person name="Mulvaney E."/>
            <person name="Ryan E."/>
            <person name="Sun H."/>
            <person name="Florea L."/>
            <person name="Miller W."/>
            <person name="Stoneking T."/>
            <person name="Nhan M."/>
            <person name="Waterston R."/>
            <person name="Wilson R.K."/>
        </authorList>
    </citation>
    <scope>NUCLEOTIDE SEQUENCE [LARGE SCALE GENOMIC DNA]</scope>
    <source>
        <strain>LT2 / SGSC1412 / ATCC 700720</strain>
    </source>
</reference>
<keyword id="KW-0963">Cytoplasm</keyword>
<keyword id="KW-1185">Reference proteome</keyword>
<keyword id="KW-0346">Stress response</keyword>
<name>IRAM_SALTY</name>
<proteinExistence type="evidence at protein level"/>
<protein>
    <recommendedName>
        <fullName evidence="1">Anti-adapter protein IraM</fullName>
    </recommendedName>
    <alternativeName>
        <fullName evidence="1">Sigma S-regulator RssC</fullName>
    </alternativeName>
</protein>